<dbReference type="EC" id="2.1.1.228" evidence="1"/>
<dbReference type="EMBL" id="CP000262">
    <property type="protein sequence ID" value="ABF37697.1"/>
    <property type="molecule type" value="Genomic_DNA"/>
</dbReference>
<dbReference type="SMR" id="Q1J777"/>
<dbReference type="KEGG" id="spi:MGAS10750_Spy0747"/>
<dbReference type="HOGENOM" id="CLU_047363_0_1_9"/>
<dbReference type="Proteomes" id="UP000002434">
    <property type="component" value="Chromosome"/>
</dbReference>
<dbReference type="GO" id="GO:0005829">
    <property type="term" value="C:cytosol"/>
    <property type="evidence" value="ECO:0007669"/>
    <property type="project" value="TreeGrafter"/>
</dbReference>
<dbReference type="GO" id="GO:0052906">
    <property type="term" value="F:tRNA (guanine(37)-N1)-methyltransferase activity"/>
    <property type="evidence" value="ECO:0007669"/>
    <property type="project" value="UniProtKB-UniRule"/>
</dbReference>
<dbReference type="GO" id="GO:0002939">
    <property type="term" value="P:tRNA N1-guanine methylation"/>
    <property type="evidence" value="ECO:0007669"/>
    <property type="project" value="TreeGrafter"/>
</dbReference>
<dbReference type="CDD" id="cd18080">
    <property type="entry name" value="TrmD-like"/>
    <property type="match status" value="1"/>
</dbReference>
<dbReference type="FunFam" id="1.10.1270.20:FF:000001">
    <property type="entry name" value="tRNA (guanine-N(1)-)-methyltransferase"/>
    <property type="match status" value="1"/>
</dbReference>
<dbReference type="FunFam" id="3.40.1280.10:FF:000001">
    <property type="entry name" value="tRNA (guanine-N(1)-)-methyltransferase"/>
    <property type="match status" value="1"/>
</dbReference>
<dbReference type="Gene3D" id="3.40.1280.10">
    <property type="match status" value="1"/>
</dbReference>
<dbReference type="Gene3D" id="1.10.1270.20">
    <property type="entry name" value="tRNA(m1g37)methyltransferase, domain 2"/>
    <property type="match status" value="1"/>
</dbReference>
<dbReference type="HAMAP" id="MF_00605">
    <property type="entry name" value="TrmD"/>
    <property type="match status" value="1"/>
</dbReference>
<dbReference type="InterPro" id="IPR029028">
    <property type="entry name" value="Alpha/beta_knot_MTases"/>
</dbReference>
<dbReference type="InterPro" id="IPR023148">
    <property type="entry name" value="tRNA_m1G_MeTrfase_C_sf"/>
</dbReference>
<dbReference type="InterPro" id="IPR002649">
    <property type="entry name" value="tRNA_m1G_MeTrfase_TrmD"/>
</dbReference>
<dbReference type="InterPro" id="IPR029026">
    <property type="entry name" value="tRNA_m1G_MTases_N"/>
</dbReference>
<dbReference type="InterPro" id="IPR016009">
    <property type="entry name" value="tRNA_MeTrfase_TRMD/TRM10"/>
</dbReference>
<dbReference type="NCBIfam" id="NF000648">
    <property type="entry name" value="PRK00026.1"/>
    <property type="match status" value="1"/>
</dbReference>
<dbReference type="NCBIfam" id="TIGR00088">
    <property type="entry name" value="trmD"/>
    <property type="match status" value="1"/>
</dbReference>
<dbReference type="PANTHER" id="PTHR46417">
    <property type="entry name" value="TRNA (GUANINE-N(1)-)-METHYLTRANSFERASE"/>
    <property type="match status" value="1"/>
</dbReference>
<dbReference type="PANTHER" id="PTHR46417:SF1">
    <property type="entry name" value="TRNA (GUANINE-N(1)-)-METHYLTRANSFERASE"/>
    <property type="match status" value="1"/>
</dbReference>
<dbReference type="Pfam" id="PF01746">
    <property type="entry name" value="tRNA_m1G_MT"/>
    <property type="match status" value="1"/>
</dbReference>
<dbReference type="PIRSF" id="PIRSF000386">
    <property type="entry name" value="tRNA_mtase"/>
    <property type="match status" value="1"/>
</dbReference>
<dbReference type="SUPFAM" id="SSF75217">
    <property type="entry name" value="alpha/beta knot"/>
    <property type="match status" value="1"/>
</dbReference>
<protein>
    <recommendedName>
        <fullName evidence="1">tRNA (guanine-N(1)-)-methyltransferase</fullName>
        <ecNumber evidence="1">2.1.1.228</ecNumber>
    </recommendedName>
    <alternativeName>
        <fullName evidence="1">M1G-methyltransferase</fullName>
    </alternativeName>
    <alternativeName>
        <fullName evidence="1">tRNA [GM37] methyltransferase</fullName>
    </alternativeName>
</protein>
<gene>
    <name evidence="1" type="primary">trmD</name>
    <name type="ordered locus">MGAS10750_Spy0747</name>
</gene>
<comment type="function">
    <text evidence="1">Specifically methylates guanosine-37 in various tRNAs.</text>
</comment>
<comment type="catalytic activity">
    <reaction evidence="1">
        <text>guanosine(37) in tRNA + S-adenosyl-L-methionine = N(1)-methylguanosine(37) in tRNA + S-adenosyl-L-homocysteine + H(+)</text>
        <dbReference type="Rhea" id="RHEA:36899"/>
        <dbReference type="Rhea" id="RHEA-COMP:10145"/>
        <dbReference type="Rhea" id="RHEA-COMP:10147"/>
        <dbReference type="ChEBI" id="CHEBI:15378"/>
        <dbReference type="ChEBI" id="CHEBI:57856"/>
        <dbReference type="ChEBI" id="CHEBI:59789"/>
        <dbReference type="ChEBI" id="CHEBI:73542"/>
        <dbReference type="ChEBI" id="CHEBI:74269"/>
        <dbReference type="EC" id="2.1.1.228"/>
    </reaction>
</comment>
<comment type="subunit">
    <text evidence="1">Homodimer.</text>
</comment>
<comment type="subcellular location">
    <subcellularLocation>
        <location evidence="1">Cytoplasm</location>
    </subcellularLocation>
</comment>
<comment type="similarity">
    <text evidence="1">Belongs to the RNA methyltransferase TrmD family.</text>
</comment>
<feature type="chain" id="PRO_0000257481" description="tRNA (guanine-N(1)-)-methyltransferase">
    <location>
        <begin position="1"/>
        <end position="239"/>
    </location>
</feature>
<feature type="binding site" evidence="1">
    <location>
        <position position="108"/>
    </location>
    <ligand>
        <name>S-adenosyl-L-methionine</name>
        <dbReference type="ChEBI" id="CHEBI:59789"/>
    </ligand>
</feature>
<feature type="binding site" evidence="1">
    <location>
        <begin position="127"/>
        <end position="132"/>
    </location>
    <ligand>
        <name>S-adenosyl-L-methionine</name>
        <dbReference type="ChEBI" id="CHEBI:59789"/>
    </ligand>
</feature>
<keyword id="KW-0963">Cytoplasm</keyword>
<keyword id="KW-0489">Methyltransferase</keyword>
<keyword id="KW-0949">S-adenosyl-L-methionine</keyword>
<keyword id="KW-0808">Transferase</keyword>
<keyword id="KW-0819">tRNA processing</keyword>
<accession>Q1J777</accession>
<name>TRMD_STRPF</name>
<reference key="1">
    <citation type="journal article" date="2006" name="Proc. Natl. Acad. Sci. U.S.A.">
        <title>Molecular genetic anatomy of inter- and intraserotype variation in the human bacterial pathogen group A Streptococcus.</title>
        <authorList>
            <person name="Beres S.B."/>
            <person name="Richter E.W."/>
            <person name="Nagiec M.J."/>
            <person name="Sumby P."/>
            <person name="Porcella S.F."/>
            <person name="DeLeo F.R."/>
            <person name="Musser J.M."/>
        </authorList>
    </citation>
    <scope>NUCLEOTIDE SEQUENCE [LARGE SCALE GENOMIC DNA]</scope>
    <source>
        <strain>MGAS10750</strain>
    </source>
</reference>
<sequence>MKIDILTLFPEMFAPLEHSIVGKAKEKGLLDIHYHNFRDYAEKARHVDDEPYGGGQGMLLRAQPIFDTIEQIEAKKPRIILLDPAGKPFTQAYAEELALEEELIFICGHYEGYDERIKTLVTDEISLGDFVLTGGELAAMTIVDATVRLIPQVLGKESSHQDDSFSSGLLEYPQYTRPYDYRGMTVPDVLMSGHHERIRLWRLEESLRKTYLRRPDLLERYDFSEEERKLLDKIKEALG</sequence>
<proteinExistence type="inferred from homology"/>
<evidence type="ECO:0000255" key="1">
    <source>
        <dbReference type="HAMAP-Rule" id="MF_00605"/>
    </source>
</evidence>
<organism>
    <name type="scientific">Streptococcus pyogenes serotype M4 (strain MGAS10750)</name>
    <dbReference type="NCBI Taxonomy" id="370554"/>
    <lineage>
        <taxon>Bacteria</taxon>
        <taxon>Bacillati</taxon>
        <taxon>Bacillota</taxon>
        <taxon>Bacilli</taxon>
        <taxon>Lactobacillales</taxon>
        <taxon>Streptococcaceae</taxon>
        <taxon>Streptococcus</taxon>
    </lineage>
</organism>